<evidence type="ECO:0000255" key="1">
    <source>
        <dbReference type="PROSITE-ProRule" id="PRU00139"/>
    </source>
</evidence>
<evidence type="ECO:0000256" key="2">
    <source>
        <dbReference type="SAM" id="MobiDB-lite"/>
    </source>
</evidence>
<evidence type="ECO:0000269" key="3">
    <source>
    </source>
</evidence>
<evidence type="ECO:0000269" key="4">
    <source>
    </source>
</evidence>
<evidence type="ECO:0000312" key="5">
    <source>
        <dbReference type="PomBase" id="SPAC1952.03"/>
    </source>
</evidence>
<gene>
    <name type="primary">otu2</name>
    <name evidence="5" type="ORF">SPAC1952.03</name>
</gene>
<name>OTU2_SCHPO</name>
<comment type="function">
    <text evidence="4">Hydrolase that can remove conjugated ubiquitin from proteins and may therefore play an important regulatory role at the level of protein turnover by preventing degradation.</text>
</comment>
<comment type="catalytic activity">
    <reaction>
        <text>Thiol-dependent hydrolysis of ester, thioester, amide, peptide and isopeptide bonds formed by the C-terminal Gly of ubiquitin (a 76-residue protein attached to proteins as an intracellular targeting signal).</text>
        <dbReference type="EC" id="3.4.19.12"/>
    </reaction>
</comment>
<comment type="subcellular location">
    <subcellularLocation>
        <location evidence="3 4">Cytoplasm</location>
    </subcellularLocation>
</comment>
<sequence length="300" mass="34600">MEELLSKQREECKELQSKITNLRKQLKEGNKKQKRALQQKISQMEADLSQKHATERQKLDKGDEETNETQQEDLLNTLLQQMEDTKITTAEKSSVQSSLNTKENTPQQPKKSRNRQKERLERRKAEMKKMSEQAELESEKMADLKNEEKKKFSKILEEAGLVAVDIPADGNCLFASISHQLNYHHNVKLNSQALRNKSADYVLKHCEQFEGFLLDEESGEVLPVSDYCNEIRNNSKWGSDIEIQALANSLEVPVHVYNTEGPVLKFNPSTVKFEKPLCIAYYQHLFGLGAHYNSLLYRDN</sequence>
<keyword id="KW-0963">Cytoplasm</keyword>
<keyword id="KW-0378">Hydrolase</keyword>
<keyword id="KW-0645">Protease</keyword>
<keyword id="KW-1185">Reference proteome</keyword>
<keyword id="KW-0788">Thiol protease</keyword>
<keyword id="KW-0833">Ubl conjugation pathway</keyword>
<protein>
    <recommendedName>
        <fullName>Ubiquitin thioesterase otu2</fullName>
        <ecNumber>3.4.19.12</ecNumber>
    </recommendedName>
    <alternativeName>
        <fullName>OTU domain-containing protein 2</fullName>
    </alternativeName>
    <alternativeName>
        <fullName>Ubiquitin specific cysteine protease</fullName>
    </alternativeName>
</protein>
<feature type="chain" id="PRO_0000318138" description="Ubiquitin thioesterase otu2">
    <location>
        <begin position="1"/>
        <end position="300"/>
    </location>
</feature>
<feature type="domain" description="OTU" evidence="1">
    <location>
        <begin position="161"/>
        <end position="298"/>
    </location>
</feature>
<feature type="region of interest" description="Disordered" evidence="2">
    <location>
        <begin position="23"/>
        <end position="73"/>
    </location>
</feature>
<feature type="region of interest" description="Disordered" evidence="2">
    <location>
        <begin position="89"/>
        <end position="141"/>
    </location>
</feature>
<feature type="compositionally biased region" description="Basic and acidic residues" evidence="2">
    <location>
        <begin position="48"/>
        <end position="61"/>
    </location>
</feature>
<feature type="compositionally biased region" description="Acidic residues" evidence="2">
    <location>
        <begin position="62"/>
        <end position="71"/>
    </location>
</feature>
<feature type="compositionally biased region" description="Polar residues" evidence="2">
    <location>
        <begin position="89"/>
        <end position="109"/>
    </location>
</feature>
<feature type="compositionally biased region" description="Basic and acidic residues" evidence="2">
    <location>
        <begin position="115"/>
        <end position="141"/>
    </location>
</feature>
<accession>Q9UUK3</accession>
<accession>A0AAN2H679</accession>
<organism>
    <name type="scientific">Schizosaccharomyces pombe (strain 972 / ATCC 24843)</name>
    <name type="common">Fission yeast</name>
    <dbReference type="NCBI Taxonomy" id="284812"/>
    <lineage>
        <taxon>Eukaryota</taxon>
        <taxon>Fungi</taxon>
        <taxon>Dikarya</taxon>
        <taxon>Ascomycota</taxon>
        <taxon>Taphrinomycotina</taxon>
        <taxon>Schizosaccharomycetes</taxon>
        <taxon>Schizosaccharomycetales</taxon>
        <taxon>Schizosaccharomycetaceae</taxon>
        <taxon>Schizosaccharomyces</taxon>
    </lineage>
</organism>
<proteinExistence type="predicted"/>
<dbReference type="EC" id="3.4.19.12"/>
<dbReference type="EMBL" id="CU329670">
    <property type="protein sequence ID" value="CAK9839075.1"/>
    <property type="molecule type" value="Genomic_DNA"/>
</dbReference>
<dbReference type="PIR" id="T37931">
    <property type="entry name" value="T37931"/>
</dbReference>
<dbReference type="RefSeq" id="NP_594806.1">
    <property type="nucleotide sequence ID" value="NM_001020234.2"/>
</dbReference>
<dbReference type="SMR" id="Q9UUK3"/>
<dbReference type="BioGRID" id="279011">
    <property type="interactions" value="31"/>
</dbReference>
<dbReference type="FunCoup" id="Q9UUK3">
    <property type="interactions" value="405"/>
</dbReference>
<dbReference type="STRING" id="284812.Q9UUK3"/>
<dbReference type="PaxDb" id="4896-SPAC1952.03.1"/>
<dbReference type="EnsemblFungi" id="SPAC1952.03.1">
    <property type="protein sequence ID" value="SPAC1952.03.1:pep"/>
    <property type="gene ID" value="SPAC1952.03"/>
</dbReference>
<dbReference type="GeneID" id="2542554"/>
<dbReference type="KEGG" id="spo:2542554"/>
<dbReference type="PomBase" id="SPAC1952.03">
    <property type="gene designation" value="otu2"/>
</dbReference>
<dbReference type="VEuPathDB" id="FungiDB:SPAC1952.03"/>
<dbReference type="eggNOG" id="KOG2606">
    <property type="taxonomic scope" value="Eukaryota"/>
</dbReference>
<dbReference type="HOGENOM" id="CLU_034963_2_0_1"/>
<dbReference type="InParanoid" id="Q9UUK3"/>
<dbReference type="OMA" id="YELGAHY"/>
<dbReference type="PhylomeDB" id="Q9UUK3"/>
<dbReference type="PRO" id="PR:Q9UUK3"/>
<dbReference type="Proteomes" id="UP000002485">
    <property type="component" value="Chromosome I"/>
</dbReference>
<dbReference type="GO" id="GO:0005737">
    <property type="term" value="C:cytoplasm"/>
    <property type="evidence" value="ECO:0007005"/>
    <property type="project" value="PomBase"/>
</dbReference>
<dbReference type="GO" id="GO:0005829">
    <property type="term" value="C:cytosol"/>
    <property type="evidence" value="ECO:0007005"/>
    <property type="project" value="PomBase"/>
</dbReference>
<dbReference type="GO" id="GO:0004843">
    <property type="term" value="F:cysteine-type deubiquitinase activity"/>
    <property type="evidence" value="ECO:0000318"/>
    <property type="project" value="GO_Central"/>
</dbReference>
<dbReference type="GO" id="GO:0008233">
    <property type="term" value="F:peptidase activity"/>
    <property type="evidence" value="ECO:0007669"/>
    <property type="project" value="UniProtKB-KW"/>
</dbReference>
<dbReference type="GO" id="GO:0036503">
    <property type="term" value="P:ERAD pathway"/>
    <property type="evidence" value="ECO:0000250"/>
    <property type="project" value="PomBase"/>
</dbReference>
<dbReference type="GO" id="GO:0006508">
    <property type="term" value="P:proteolysis"/>
    <property type="evidence" value="ECO:0007669"/>
    <property type="project" value="UniProtKB-KW"/>
</dbReference>
<dbReference type="CDD" id="cd22762">
    <property type="entry name" value="OTU_fungi_OTU2-like"/>
    <property type="match status" value="1"/>
</dbReference>
<dbReference type="Gene3D" id="3.90.70.80">
    <property type="match status" value="1"/>
</dbReference>
<dbReference type="InterPro" id="IPR049771">
    <property type="entry name" value="OTU2-like_OTU"/>
</dbReference>
<dbReference type="InterPro" id="IPR003323">
    <property type="entry name" value="OTU_dom"/>
</dbReference>
<dbReference type="InterPro" id="IPR038765">
    <property type="entry name" value="Papain-like_cys_pep_sf"/>
</dbReference>
<dbReference type="InterPro" id="IPR050704">
    <property type="entry name" value="Peptidase_C85-like"/>
</dbReference>
<dbReference type="PANTHER" id="PTHR12419:SF10">
    <property type="entry name" value="DEUBIQUITINASE OTUD6B"/>
    <property type="match status" value="1"/>
</dbReference>
<dbReference type="PANTHER" id="PTHR12419">
    <property type="entry name" value="OTU DOMAIN CONTAINING PROTEIN"/>
    <property type="match status" value="1"/>
</dbReference>
<dbReference type="Pfam" id="PF02338">
    <property type="entry name" value="OTU"/>
    <property type="match status" value="1"/>
</dbReference>
<dbReference type="SUPFAM" id="SSF54001">
    <property type="entry name" value="Cysteine proteinases"/>
    <property type="match status" value="1"/>
</dbReference>
<dbReference type="PROSITE" id="PS50802">
    <property type="entry name" value="OTU"/>
    <property type="match status" value="1"/>
</dbReference>
<reference key="1">
    <citation type="journal article" date="2002" name="Nature">
        <title>The genome sequence of Schizosaccharomyces pombe.</title>
        <authorList>
            <person name="Wood V."/>
            <person name="Gwilliam R."/>
            <person name="Rajandream M.A."/>
            <person name="Lyne M.H."/>
            <person name="Lyne R."/>
            <person name="Stewart A."/>
            <person name="Sgouros J.G."/>
            <person name="Peat N."/>
            <person name="Hayles J."/>
            <person name="Baker S.G."/>
            <person name="Basham D."/>
            <person name="Bowman S."/>
            <person name="Brooks K."/>
            <person name="Brown D."/>
            <person name="Brown S."/>
            <person name="Chillingworth T."/>
            <person name="Churcher C.M."/>
            <person name="Collins M."/>
            <person name="Connor R."/>
            <person name="Cronin A."/>
            <person name="Davis P."/>
            <person name="Feltwell T."/>
            <person name="Fraser A."/>
            <person name="Gentles S."/>
            <person name="Goble A."/>
            <person name="Hamlin N."/>
            <person name="Harris D.E."/>
            <person name="Hidalgo J."/>
            <person name="Hodgson G."/>
            <person name="Holroyd S."/>
            <person name="Hornsby T."/>
            <person name="Howarth S."/>
            <person name="Huckle E.J."/>
            <person name="Hunt S."/>
            <person name="Jagels K."/>
            <person name="James K.D."/>
            <person name="Jones L."/>
            <person name="Jones M."/>
            <person name="Leather S."/>
            <person name="McDonald S."/>
            <person name="McLean J."/>
            <person name="Mooney P."/>
            <person name="Moule S."/>
            <person name="Mungall K.L."/>
            <person name="Murphy L.D."/>
            <person name="Niblett D."/>
            <person name="Odell C."/>
            <person name="Oliver K."/>
            <person name="O'Neil S."/>
            <person name="Pearson D."/>
            <person name="Quail M.A."/>
            <person name="Rabbinowitsch E."/>
            <person name="Rutherford K.M."/>
            <person name="Rutter S."/>
            <person name="Saunders D."/>
            <person name="Seeger K."/>
            <person name="Sharp S."/>
            <person name="Skelton J."/>
            <person name="Simmonds M.N."/>
            <person name="Squares R."/>
            <person name="Squares S."/>
            <person name="Stevens K."/>
            <person name="Taylor K."/>
            <person name="Taylor R.G."/>
            <person name="Tivey A."/>
            <person name="Walsh S.V."/>
            <person name="Warren T."/>
            <person name="Whitehead S."/>
            <person name="Woodward J.R."/>
            <person name="Volckaert G."/>
            <person name="Aert R."/>
            <person name="Robben J."/>
            <person name="Grymonprez B."/>
            <person name="Weltjens I."/>
            <person name="Vanstreels E."/>
            <person name="Rieger M."/>
            <person name="Schaefer M."/>
            <person name="Mueller-Auer S."/>
            <person name="Gabel C."/>
            <person name="Fuchs M."/>
            <person name="Duesterhoeft A."/>
            <person name="Fritzc C."/>
            <person name="Holzer E."/>
            <person name="Moestl D."/>
            <person name="Hilbert H."/>
            <person name="Borzym K."/>
            <person name="Langer I."/>
            <person name="Beck A."/>
            <person name="Lehrach H."/>
            <person name="Reinhardt R."/>
            <person name="Pohl T.M."/>
            <person name="Eger P."/>
            <person name="Zimmermann W."/>
            <person name="Wedler H."/>
            <person name="Wambutt R."/>
            <person name="Purnelle B."/>
            <person name="Goffeau A."/>
            <person name="Cadieu E."/>
            <person name="Dreano S."/>
            <person name="Gloux S."/>
            <person name="Lelaure V."/>
            <person name="Mottier S."/>
            <person name="Galibert F."/>
            <person name="Aves S.J."/>
            <person name="Xiang Z."/>
            <person name="Hunt C."/>
            <person name="Moore K."/>
            <person name="Hurst S.M."/>
            <person name="Lucas M."/>
            <person name="Rochet M."/>
            <person name="Gaillardin C."/>
            <person name="Tallada V.A."/>
            <person name="Garzon A."/>
            <person name="Thode G."/>
            <person name="Daga R.R."/>
            <person name="Cruzado L."/>
            <person name="Jimenez J."/>
            <person name="Sanchez M."/>
            <person name="del Rey F."/>
            <person name="Benito J."/>
            <person name="Dominguez A."/>
            <person name="Revuelta J.L."/>
            <person name="Moreno S."/>
            <person name="Armstrong J."/>
            <person name="Forsburg S.L."/>
            <person name="Cerutti L."/>
            <person name="Lowe T."/>
            <person name="McCombie W.R."/>
            <person name="Paulsen I."/>
            <person name="Potashkin J."/>
            <person name="Shpakovski G.V."/>
            <person name="Ussery D."/>
            <person name="Barrell B.G."/>
            <person name="Nurse P."/>
        </authorList>
    </citation>
    <scope>NUCLEOTIDE SEQUENCE [LARGE SCALE GENOMIC DNA]</scope>
    <source>
        <strain>972 / ATCC 24843</strain>
    </source>
</reference>
<reference key="2">
    <citation type="journal article" date="2006" name="Nat. Biotechnol.">
        <title>ORFeome cloning and global analysis of protein localization in the fission yeast Schizosaccharomyces pombe.</title>
        <authorList>
            <person name="Matsuyama A."/>
            <person name="Arai R."/>
            <person name="Yashiroda Y."/>
            <person name="Shirai A."/>
            <person name="Kamata A."/>
            <person name="Sekido S."/>
            <person name="Kobayashi Y."/>
            <person name="Hashimoto A."/>
            <person name="Hamamoto M."/>
            <person name="Hiraoka Y."/>
            <person name="Horinouchi S."/>
            <person name="Yoshida M."/>
        </authorList>
    </citation>
    <scope>SUBCELLULAR LOCATION [LARGE SCALE ANALYSIS]</scope>
</reference>
<reference key="3">
    <citation type="journal article" date="2010" name="PLoS Biol.">
        <title>A global census of fission yeast deubiquitinating enzyme localization and interaction networks reveals distinct compartmentalization profiles and overlapping functions in endocytosis and polarity.</title>
        <authorList>
            <person name="Kouranti I."/>
            <person name="McLean J.R."/>
            <person name="Feoktistova A."/>
            <person name="Liang P."/>
            <person name="Johnson A.E."/>
            <person name="Roberts-Galbraith R.H."/>
            <person name="Gould K.L."/>
        </authorList>
    </citation>
    <scope>SUBCELLULAR LOCATION</scope>
    <scope>FUNCTION</scope>
</reference>